<comment type="function">
    <text evidence="1">Together with the chaperonin GroEL, plays an essential role in assisting protein folding. The GroEL-GroES system forms a nano-cage that allows encapsulation of the non-native substrate proteins and provides a physical environment optimized to promote and accelerate protein folding. GroES binds to the apical surface of the GroEL ring, thereby capping the opening of the GroEL channel.</text>
</comment>
<comment type="subunit">
    <text evidence="1">Heptamer of 7 subunits arranged in a ring. Interacts with the chaperonin GroEL.</text>
</comment>
<comment type="subcellular location">
    <subcellularLocation>
        <location evidence="1">Cytoplasm</location>
    </subcellularLocation>
</comment>
<comment type="similarity">
    <text evidence="1">Belongs to the GroES chaperonin family.</text>
</comment>
<name>CH10_STRGC</name>
<reference key="1">
    <citation type="journal article" date="2007" name="J. Bacteriol.">
        <title>Genome-wide transcriptional changes in Streptococcus gordonii in response to competence signaling peptide.</title>
        <authorList>
            <person name="Vickerman M.M."/>
            <person name="Iobst S."/>
            <person name="Jesionowski A.M."/>
            <person name="Gill S.R."/>
        </authorList>
    </citation>
    <scope>NUCLEOTIDE SEQUENCE [LARGE SCALE GENOMIC DNA]</scope>
    <source>
        <strain>Challis / ATCC 35105 / BCRC 15272 / CH1 / DL1 / V288</strain>
    </source>
</reference>
<gene>
    <name evidence="1" type="primary">groES</name>
    <name evidence="1" type="synonym">groS</name>
    <name type="ordered locus">SGO_1886</name>
</gene>
<protein>
    <recommendedName>
        <fullName evidence="1">Co-chaperonin GroES</fullName>
    </recommendedName>
    <alternativeName>
        <fullName evidence="1">10 kDa chaperonin</fullName>
    </alternativeName>
    <alternativeName>
        <fullName evidence="1">Chaperonin-10</fullName>
        <shortName evidence="1">Cpn10</shortName>
    </alternativeName>
</protein>
<evidence type="ECO:0000255" key="1">
    <source>
        <dbReference type="HAMAP-Rule" id="MF_00580"/>
    </source>
</evidence>
<sequence>MLKPLGDRVVLKIEEKEEKVGGFVIAGNSHAATKTATVVAVGQGVRTLTGELVAPSVKAGDKVLVESHAGVEVKDGEETYLLVSEANILAIVE</sequence>
<accession>A8AZE2</accession>
<organism>
    <name type="scientific">Streptococcus gordonii (strain Challis / ATCC 35105 / BCRC 15272 / CH1 / DL1 / V288)</name>
    <dbReference type="NCBI Taxonomy" id="467705"/>
    <lineage>
        <taxon>Bacteria</taxon>
        <taxon>Bacillati</taxon>
        <taxon>Bacillota</taxon>
        <taxon>Bacilli</taxon>
        <taxon>Lactobacillales</taxon>
        <taxon>Streptococcaceae</taxon>
        <taxon>Streptococcus</taxon>
    </lineage>
</organism>
<feature type="chain" id="PRO_1000082399" description="Co-chaperonin GroES">
    <location>
        <begin position="1"/>
        <end position="93"/>
    </location>
</feature>
<proteinExistence type="inferred from homology"/>
<keyword id="KW-0143">Chaperone</keyword>
<keyword id="KW-0963">Cytoplasm</keyword>
<keyword id="KW-1185">Reference proteome</keyword>
<dbReference type="EMBL" id="CP000725">
    <property type="protein sequence ID" value="ABV09963.1"/>
    <property type="molecule type" value="Genomic_DNA"/>
</dbReference>
<dbReference type="RefSeq" id="WP_012130907.1">
    <property type="nucleotide sequence ID" value="NC_009785.1"/>
</dbReference>
<dbReference type="SMR" id="A8AZE2"/>
<dbReference type="STRING" id="467705.SGO_1886"/>
<dbReference type="KEGG" id="sgo:SGO_1886"/>
<dbReference type="eggNOG" id="COG0234">
    <property type="taxonomic scope" value="Bacteria"/>
</dbReference>
<dbReference type="HOGENOM" id="CLU_132825_1_2_9"/>
<dbReference type="Proteomes" id="UP000001131">
    <property type="component" value="Chromosome"/>
</dbReference>
<dbReference type="GO" id="GO:0005737">
    <property type="term" value="C:cytoplasm"/>
    <property type="evidence" value="ECO:0007669"/>
    <property type="project" value="UniProtKB-SubCell"/>
</dbReference>
<dbReference type="GO" id="GO:0005524">
    <property type="term" value="F:ATP binding"/>
    <property type="evidence" value="ECO:0007669"/>
    <property type="project" value="InterPro"/>
</dbReference>
<dbReference type="GO" id="GO:0046872">
    <property type="term" value="F:metal ion binding"/>
    <property type="evidence" value="ECO:0007669"/>
    <property type="project" value="TreeGrafter"/>
</dbReference>
<dbReference type="GO" id="GO:0044183">
    <property type="term" value="F:protein folding chaperone"/>
    <property type="evidence" value="ECO:0007669"/>
    <property type="project" value="InterPro"/>
</dbReference>
<dbReference type="GO" id="GO:0051087">
    <property type="term" value="F:protein-folding chaperone binding"/>
    <property type="evidence" value="ECO:0007669"/>
    <property type="project" value="TreeGrafter"/>
</dbReference>
<dbReference type="GO" id="GO:0051082">
    <property type="term" value="F:unfolded protein binding"/>
    <property type="evidence" value="ECO:0007669"/>
    <property type="project" value="TreeGrafter"/>
</dbReference>
<dbReference type="GO" id="GO:0051085">
    <property type="term" value="P:chaperone cofactor-dependent protein refolding"/>
    <property type="evidence" value="ECO:0007669"/>
    <property type="project" value="TreeGrafter"/>
</dbReference>
<dbReference type="CDD" id="cd00320">
    <property type="entry name" value="cpn10"/>
    <property type="match status" value="1"/>
</dbReference>
<dbReference type="FunFam" id="2.30.33.40:FF:000007">
    <property type="entry name" value="10 kDa chaperonin"/>
    <property type="match status" value="1"/>
</dbReference>
<dbReference type="Gene3D" id="2.30.33.40">
    <property type="entry name" value="GroES chaperonin"/>
    <property type="match status" value="1"/>
</dbReference>
<dbReference type="HAMAP" id="MF_00580">
    <property type="entry name" value="CH10"/>
    <property type="match status" value="1"/>
</dbReference>
<dbReference type="InterPro" id="IPR020818">
    <property type="entry name" value="Chaperonin_GroES"/>
</dbReference>
<dbReference type="InterPro" id="IPR037124">
    <property type="entry name" value="Chaperonin_GroES_sf"/>
</dbReference>
<dbReference type="InterPro" id="IPR018369">
    <property type="entry name" value="Chaprnonin_Cpn10_CS"/>
</dbReference>
<dbReference type="InterPro" id="IPR011032">
    <property type="entry name" value="GroES-like_sf"/>
</dbReference>
<dbReference type="NCBIfam" id="NF001528">
    <property type="entry name" value="PRK00364.1-4"/>
    <property type="match status" value="1"/>
</dbReference>
<dbReference type="PANTHER" id="PTHR10772">
    <property type="entry name" value="10 KDA HEAT SHOCK PROTEIN"/>
    <property type="match status" value="1"/>
</dbReference>
<dbReference type="PANTHER" id="PTHR10772:SF58">
    <property type="entry name" value="CO-CHAPERONIN GROES"/>
    <property type="match status" value="1"/>
</dbReference>
<dbReference type="Pfam" id="PF00166">
    <property type="entry name" value="Cpn10"/>
    <property type="match status" value="1"/>
</dbReference>
<dbReference type="PRINTS" id="PR00297">
    <property type="entry name" value="CHAPERONIN10"/>
</dbReference>
<dbReference type="SMART" id="SM00883">
    <property type="entry name" value="Cpn10"/>
    <property type="match status" value="1"/>
</dbReference>
<dbReference type="SUPFAM" id="SSF50129">
    <property type="entry name" value="GroES-like"/>
    <property type="match status" value="1"/>
</dbReference>
<dbReference type="PROSITE" id="PS00681">
    <property type="entry name" value="CHAPERONINS_CPN10"/>
    <property type="match status" value="1"/>
</dbReference>